<reference key="1">
    <citation type="journal article" date="2008" name="J. Biotechnol.">
        <title>The genome of Xanthomonas campestris pv. campestris B100 and its use for the reconstruction of metabolic pathways involved in xanthan biosynthesis.</title>
        <authorList>
            <person name="Vorhoelter F.-J."/>
            <person name="Schneiker S."/>
            <person name="Goesmann A."/>
            <person name="Krause L."/>
            <person name="Bekel T."/>
            <person name="Kaiser O."/>
            <person name="Linke B."/>
            <person name="Patschkowski T."/>
            <person name="Rueckert C."/>
            <person name="Schmid J."/>
            <person name="Sidhu V.K."/>
            <person name="Sieber V."/>
            <person name="Tauch A."/>
            <person name="Watt S.A."/>
            <person name="Weisshaar B."/>
            <person name="Becker A."/>
            <person name="Niehaus K."/>
            <person name="Puehler A."/>
        </authorList>
    </citation>
    <scope>NUCLEOTIDE SEQUENCE [LARGE SCALE GENOMIC DNA]</scope>
    <source>
        <strain>B100</strain>
    </source>
</reference>
<comment type="function">
    <text evidence="1">ATP-dependent specificity component of the Clp protease. It directs the protease to specific substrates. Can perform chaperone functions in the absence of ClpP.</text>
</comment>
<comment type="subunit">
    <text evidence="1">Component of the ClpX-ClpP complex. Forms a hexameric ring that, in the presence of ATP, binds to fourteen ClpP subunits assembled into a disk-like structure with a central cavity, resembling the structure of eukaryotic proteasomes.</text>
</comment>
<comment type="similarity">
    <text evidence="1">Belongs to the ClpX chaperone family.</text>
</comment>
<evidence type="ECO:0000255" key="1">
    <source>
        <dbReference type="HAMAP-Rule" id="MF_00175"/>
    </source>
</evidence>
<evidence type="ECO:0000255" key="2">
    <source>
        <dbReference type="PROSITE-ProRule" id="PRU01250"/>
    </source>
</evidence>
<accession>B0RTF5</accession>
<sequence length="428" mass="47136">MSEDRQGRSGDSNKILYCSFCGKSQHEVRKLIAGPSVFICDECVELCNDIIREELEEKAQSARSSLPKPREILEVLDQYVIGQLRAKRTLAVAVYNHYKRIESRSKNDEVELAKSNILLVGPTGSGKTLLAETLARLLNVPFTIADATTLTEAGYVGEDVENIIQKLLQKCDYDVEKAQQGIVYIDEIDKISRKSENPSITRDVSGEGVQQALLKLIEGTVASVPPQGGRKHPQQEFLQVDTKNILFICGGAFAGLDKVIQARSNDAGGIGFGAKVKSSERKQEVGKILAEVEPEDLIKFGLIPEFVGRLPVVATLEELDEPALIKILTEPKNAITKQFKKLFEMESVELEFRPDALSAIAKKALKRKTGARGLRTIVESVLLDTMYELPSQENVSKVVVDESVIEHKSEPYLIYQAQPAPAKAASGD</sequence>
<gene>
    <name evidence="1" type="primary">clpX</name>
    <name type="ordered locus">xcc-b100_3379</name>
</gene>
<protein>
    <recommendedName>
        <fullName evidence="1">ATP-dependent Clp protease ATP-binding subunit ClpX</fullName>
    </recommendedName>
</protein>
<name>CLPX_XANCB</name>
<proteinExistence type="inferred from homology"/>
<organism>
    <name type="scientific">Xanthomonas campestris pv. campestris (strain B100)</name>
    <dbReference type="NCBI Taxonomy" id="509169"/>
    <lineage>
        <taxon>Bacteria</taxon>
        <taxon>Pseudomonadati</taxon>
        <taxon>Pseudomonadota</taxon>
        <taxon>Gammaproteobacteria</taxon>
        <taxon>Lysobacterales</taxon>
        <taxon>Lysobacteraceae</taxon>
        <taxon>Xanthomonas</taxon>
    </lineage>
</organism>
<keyword id="KW-0067">ATP-binding</keyword>
<keyword id="KW-0143">Chaperone</keyword>
<keyword id="KW-0479">Metal-binding</keyword>
<keyword id="KW-0547">Nucleotide-binding</keyword>
<keyword id="KW-0862">Zinc</keyword>
<feature type="chain" id="PRO_1000098016" description="ATP-dependent Clp protease ATP-binding subunit ClpX">
    <location>
        <begin position="1"/>
        <end position="428"/>
    </location>
</feature>
<feature type="domain" description="ClpX-type ZB" evidence="2">
    <location>
        <begin position="6"/>
        <end position="59"/>
    </location>
</feature>
<feature type="binding site" evidence="2">
    <location>
        <position position="18"/>
    </location>
    <ligand>
        <name>Zn(2+)</name>
        <dbReference type="ChEBI" id="CHEBI:29105"/>
    </ligand>
</feature>
<feature type="binding site" evidence="2">
    <location>
        <position position="21"/>
    </location>
    <ligand>
        <name>Zn(2+)</name>
        <dbReference type="ChEBI" id="CHEBI:29105"/>
    </ligand>
</feature>
<feature type="binding site" evidence="2">
    <location>
        <position position="40"/>
    </location>
    <ligand>
        <name>Zn(2+)</name>
        <dbReference type="ChEBI" id="CHEBI:29105"/>
    </ligand>
</feature>
<feature type="binding site" evidence="2">
    <location>
        <position position="43"/>
    </location>
    <ligand>
        <name>Zn(2+)</name>
        <dbReference type="ChEBI" id="CHEBI:29105"/>
    </ligand>
</feature>
<feature type="binding site" evidence="1">
    <location>
        <begin position="122"/>
        <end position="129"/>
    </location>
    <ligand>
        <name>ATP</name>
        <dbReference type="ChEBI" id="CHEBI:30616"/>
    </ligand>
</feature>
<dbReference type="EMBL" id="AM920689">
    <property type="protein sequence ID" value="CAP52744.1"/>
    <property type="molecule type" value="Genomic_DNA"/>
</dbReference>
<dbReference type="SMR" id="B0RTF5"/>
<dbReference type="KEGG" id="xca:xcc-b100_3379"/>
<dbReference type="HOGENOM" id="CLU_014218_8_2_6"/>
<dbReference type="Proteomes" id="UP000001188">
    <property type="component" value="Chromosome"/>
</dbReference>
<dbReference type="GO" id="GO:0009376">
    <property type="term" value="C:HslUV protease complex"/>
    <property type="evidence" value="ECO:0007669"/>
    <property type="project" value="TreeGrafter"/>
</dbReference>
<dbReference type="GO" id="GO:0005524">
    <property type="term" value="F:ATP binding"/>
    <property type="evidence" value="ECO:0007669"/>
    <property type="project" value="UniProtKB-UniRule"/>
</dbReference>
<dbReference type="GO" id="GO:0016887">
    <property type="term" value="F:ATP hydrolysis activity"/>
    <property type="evidence" value="ECO:0007669"/>
    <property type="project" value="InterPro"/>
</dbReference>
<dbReference type="GO" id="GO:0140662">
    <property type="term" value="F:ATP-dependent protein folding chaperone"/>
    <property type="evidence" value="ECO:0007669"/>
    <property type="project" value="InterPro"/>
</dbReference>
<dbReference type="GO" id="GO:0046983">
    <property type="term" value="F:protein dimerization activity"/>
    <property type="evidence" value="ECO:0007669"/>
    <property type="project" value="InterPro"/>
</dbReference>
<dbReference type="GO" id="GO:0051082">
    <property type="term" value="F:unfolded protein binding"/>
    <property type="evidence" value="ECO:0007669"/>
    <property type="project" value="UniProtKB-UniRule"/>
</dbReference>
<dbReference type="GO" id="GO:0008270">
    <property type="term" value="F:zinc ion binding"/>
    <property type="evidence" value="ECO:0007669"/>
    <property type="project" value="InterPro"/>
</dbReference>
<dbReference type="GO" id="GO:0051301">
    <property type="term" value="P:cell division"/>
    <property type="evidence" value="ECO:0007669"/>
    <property type="project" value="TreeGrafter"/>
</dbReference>
<dbReference type="GO" id="GO:0051603">
    <property type="term" value="P:proteolysis involved in protein catabolic process"/>
    <property type="evidence" value="ECO:0007669"/>
    <property type="project" value="TreeGrafter"/>
</dbReference>
<dbReference type="CDD" id="cd19497">
    <property type="entry name" value="RecA-like_ClpX"/>
    <property type="match status" value="1"/>
</dbReference>
<dbReference type="FunFam" id="1.10.8.60:FF:000002">
    <property type="entry name" value="ATP-dependent Clp protease ATP-binding subunit ClpX"/>
    <property type="match status" value="1"/>
</dbReference>
<dbReference type="FunFam" id="3.40.50.300:FF:000005">
    <property type="entry name" value="ATP-dependent Clp protease ATP-binding subunit ClpX"/>
    <property type="match status" value="1"/>
</dbReference>
<dbReference type="Gene3D" id="1.10.8.60">
    <property type="match status" value="1"/>
</dbReference>
<dbReference type="Gene3D" id="6.20.220.10">
    <property type="entry name" value="ClpX chaperone, C4-type zinc finger domain"/>
    <property type="match status" value="1"/>
</dbReference>
<dbReference type="Gene3D" id="3.40.50.300">
    <property type="entry name" value="P-loop containing nucleotide triphosphate hydrolases"/>
    <property type="match status" value="1"/>
</dbReference>
<dbReference type="HAMAP" id="MF_00175">
    <property type="entry name" value="ClpX"/>
    <property type="match status" value="1"/>
</dbReference>
<dbReference type="InterPro" id="IPR003593">
    <property type="entry name" value="AAA+_ATPase"/>
</dbReference>
<dbReference type="InterPro" id="IPR050052">
    <property type="entry name" value="ATP-dep_Clp_protease_ClpX"/>
</dbReference>
<dbReference type="InterPro" id="IPR003959">
    <property type="entry name" value="ATPase_AAA_core"/>
</dbReference>
<dbReference type="InterPro" id="IPR019489">
    <property type="entry name" value="Clp_ATPase_C"/>
</dbReference>
<dbReference type="InterPro" id="IPR004487">
    <property type="entry name" value="Clp_protease_ATP-bd_su_ClpX"/>
</dbReference>
<dbReference type="InterPro" id="IPR046425">
    <property type="entry name" value="ClpX_bact"/>
</dbReference>
<dbReference type="InterPro" id="IPR027417">
    <property type="entry name" value="P-loop_NTPase"/>
</dbReference>
<dbReference type="InterPro" id="IPR010603">
    <property type="entry name" value="Znf_CppX_C4"/>
</dbReference>
<dbReference type="InterPro" id="IPR038366">
    <property type="entry name" value="Znf_CppX_C4_sf"/>
</dbReference>
<dbReference type="NCBIfam" id="TIGR00382">
    <property type="entry name" value="clpX"/>
    <property type="match status" value="1"/>
</dbReference>
<dbReference type="NCBIfam" id="NF003745">
    <property type="entry name" value="PRK05342.1"/>
    <property type="match status" value="1"/>
</dbReference>
<dbReference type="PANTHER" id="PTHR48102:SF7">
    <property type="entry name" value="ATP-DEPENDENT CLP PROTEASE ATP-BINDING SUBUNIT CLPX-LIKE, MITOCHONDRIAL"/>
    <property type="match status" value="1"/>
</dbReference>
<dbReference type="PANTHER" id="PTHR48102">
    <property type="entry name" value="ATP-DEPENDENT CLP PROTEASE ATP-BINDING SUBUNIT CLPX-LIKE, MITOCHONDRIAL-RELATED"/>
    <property type="match status" value="1"/>
</dbReference>
<dbReference type="Pfam" id="PF07724">
    <property type="entry name" value="AAA_2"/>
    <property type="match status" value="1"/>
</dbReference>
<dbReference type="Pfam" id="PF10431">
    <property type="entry name" value="ClpB_D2-small"/>
    <property type="match status" value="1"/>
</dbReference>
<dbReference type="Pfam" id="PF06689">
    <property type="entry name" value="zf-C4_ClpX"/>
    <property type="match status" value="1"/>
</dbReference>
<dbReference type="SMART" id="SM00382">
    <property type="entry name" value="AAA"/>
    <property type="match status" value="1"/>
</dbReference>
<dbReference type="SMART" id="SM01086">
    <property type="entry name" value="ClpB_D2-small"/>
    <property type="match status" value="1"/>
</dbReference>
<dbReference type="SMART" id="SM00994">
    <property type="entry name" value="zf-C4_ClpX"/>
    <property type="match status" value="1"/>
</dbReference>
<dbReference type="SUPFAM" id="SSF57716">
    <property type="entry name" value="Glucocorticoid receptor-like (DNA-binding domain)"/>
    <property type="match status" value="1"/>
</dbReference>
<dbReference type="SUPFAM" id="SSF52540">
    <property type="entry name" value="P-loop containing nucleoside triphosphate hydrolases"/>
    <property type="match status" value="1"/>
</dbReference>
<dbReference type="PROSITE" id="PS51902">
    <property type="entry name" value="CLPX_ZB"/>
    <property type="match status" value="1"/>
</dbReference>